<accession>Q8DNC9</accession>
<comment type="function">
    <text evidence="1">Required for correct processing of both the 5' and 3' ends of 5S rRNA precursor. Cleaves both sides of a double-stranded region yielding mature 5S rRNA in one step.</text>
</comment>
<comment type="catalytic activity">
    <reaction evidence="1">
        <text>Endonucleolytic cleavage of RNA, removing 21 and 42 nucleotides, respectively, from the 5'- and 3'-termini of a 5S-rRNA precursor.</text>
        <dbReference type="EC" id="3.1.26.8"/>
    </reaction>
</comment>
<comment type="cofactor">
    <cofactor evidence="1">
        <name>Mg(2+)</name>
        <dbReference type="ChEBI" id="CHEBI:18420"/>
    </cofactor>
    <text evidence="1">Binds two Mg(2+) per subunit.</text>
</comment>
<comment type="subcellular location">
    <subcellularLocation>
        <location evidence="1">Cytoplasm</location>
    </subcellularLocation>
</comment>
<comment type="similarity">
    <text evidence="1">Belongs to the ribonuclease M5 family.</text>
</comment>
<sequence length="186" mass="21505">MKERISQVIVVEGRDDTVNLKRYFDVETYETRGSAINDQDIERIQRLHQRHGVIVFTDPDFNGERIRRMIMTAIPTVQHAFLKRDEAVPKSKTKGRSLGIEHASYEDLKTALAQVTEQFEHESQFDISRSDLIRLGFLAGADSRKRREYLGETLRIGYSNGKQLLKRLELFGVTLAEVEEAMKSYE</sequence>
<protein>
    <recommendedName>
        <fullName evidence="1">Ribonuclease M5</fullName>
        <ecNumber evidence="1">3.1.26.8</ecNumber>
    </recommendedName>
    <alternativeName>
        <fullName evidence="1">RNase M5</fullName>
    </alternativeName>
    <alternativeName>
        <fullName evidence="1">Ribosomal RNA terminal maturase M5</fullName>
    </alternativeName>
</protein>
<dbReference type="EC" id="3.1.26.8" evidence="1"/>
<dbReference type="EMBL" id="AE007317">
    <property type="protein sequence ID" value="AAL00607.1"/>
    <property type="molecule type" value="Genomic_DNA"/>
</dbReference>
<dbReference type="PIR" id="B98097">
    <property type="entry name" value="B98097"/>
</dbReference>
<dbReference type="RefSeq" id="NP_359396.1">
    <property type="nucleotide sequence ID" value="NC_003098.1"/>
</dbReference>
<dbReference type="RefSeq" id="WP_000664448.1">
    <property type="nucleotide sequence ID" value="NC_003098.1"/>
</dbReference>
<dbReference type="SMR" id="Q8DNC9"/>
<dbReference type="STRING" id="171101.spr1804"/>
<dbReference type="KEGG" id="spr:spr1804"/>
<dbReference type="PATRIC" id="fig|171101.6.peg.1946"/>
<dbReference type="eggNOG" id="COG1658">
    <property type="taxonomic scope" value="Bacteria"/>
</dbReference>
<dbReference type="HOGENOM" id="CLU_109405_0_0_9"/>
<dbReference type="Proteomes" id="UP000000586">
    <property type="component" value="Chromosome"/>
</dbReference>
<dbReference type="GO" id="GO:0005737">
    <property type="term" value="C:cytoplasm"/>
    <property type="evidence" value="ECO:0007669"/>
    <property type="project" value="UniProtKB-SubCell"/>
</dbReference>
<dbReference type="GO" id="GO:0046872">
    <property type="term" value="F:metal ion binding"/>
    <property type="evidence" value="ECO:0007669"/>
    <property type="project" value="UniProtKB-KW"/>
</dbReference>
<dbReference type="GO" id="GO:0043822">
    <property type="term" value="F:ribonuclease M5 activity"/>
    <property type="evidence" value="ECO:0000318"/>
    <property type="project" value="GO_Central"/>
</dbReference>
<dbReference type="GO" id="GO:0019843">
    <property type="term" value="F:rRNA binding"/>
    <property type="evidence" value="ECO:0007669"/>
    <property type="project" value="UniProtKB-KW"/>
</dbReference>
<dbReference type="GO" id="GO:0006364">
    <property type="term" value="P:rRNA processing"/>
    <property type="evidence" value="ECO:0000318"/>
    <property type="project" value="GO_Central"/>
</dbReference>
<dbReference type="CDD" id="cd01027">
    <property type="entry name" value="TOPRIM_RNase_M5_like"/>
    <property type="match status" value="1"/>
</dbReference>
<dbReference type="FunFam" id="3.40.1360.10:FF:000006">
    <property type="entry name" value="Ribonuclease M5"/>
    <property type="match status" value="1"/>
</dbReference>
<dbReference type="Gene3D" id="3.40.1360.10">
    <property type="match status" value="1"/>
</dbReference>
<dbReference type="HAMAP" id="MF_01469">
    <property type="entry name" value="RNase_M5"/>
    <property type="match status" value="1"/>
</dbReference>
<dbReference type="InterPro" id="IPR004466">
    <property type="entry name" value="RNase_M5"/>
</dbReference>
<dbReference type="InterPro" id="IPR025156">
    <property type="entry name" value="RNase_M5_C"/>
</dbReference>
<dbReference type="InterPro" id="IPR006171">
    <property type="entry name" value="TOPRIM_dom"/>
</dbReference>
<dbReference type="InterPro" id="IPR034141">
    <property type="entry name" value="TOPRIM_RNase_M5-like"/>
</dbReference>
<dbReference type="NCBIfam" id="TIGR00334">
    <property type="entry name" value="5S_RNA_mat_M5"/>
    <property type="match status" value="1"/>
</dbReference>
<dbReference type="PANTHER" id="PTHR39156">
    <property type="entry name" value="RIBONUCLEASE M5"/>
    <property type="match status" value="1"/>
</dbReference>
<dbReference type="PANTHER" id="PTHR39156:SF1">
    <property type="entry name" value="RIBONUCLEASE M5"/>
    <property type="match status" value="1"/>
</dbReference>
<dbReference type="Pfam" id="PF13331">
    <property type="entry name" value="DUF4093"/>
    <property type="match status" value="1"/>
</dbReference>
<dbReference type="Pfam" id="PF01751">
    <property type="entry name" value="Toprim"/>
    <property type="match status" value="1"/>
</dbReference>
<dbReference type="SMART" id="SM00493">
    <property type="entry name" value="TOPRIM"/>
    <property type="match status" value="1"/>
</dbReference>
<dbReference type="SUPFAM" id="SSF110455">
    <property type="entry name" value="Toprim domain"/>
    <property type="match status" value="1"/>
</dbReference>
<dbReference type="PROSITE" id="PS50880">
    <property type="entry name" value="TOPRIM"/>
    <property type="match status" value="1"/>
</dbReference>
<evidence type="ECO:0000255" key="1">
    <source>
        <dbReference type="HAMAP-Rule" id="MF_01469"/>
    </source>
</evidence>
<organism>
    <name type="scientific">Streptococcus pneumoniae (strain ATCC BAA-255 / R6)</name>
    <dbReference type="NCBI Taxonomy" id="171101"/>
    <lineage>
        <taxon>Bacteria</taxon>
        <taxon>Bacillati</taxon>
        <taxon>Bacillota</taxon>
        <taxon>Bacilli</taxon>
        <taxon>Lactobacillales</taxon>
        <taxon>Streptococcaceae</taxon>
        <taxon>Streptococcus</taxon>
    </lineage>
</organism>
<keyword id="KW-0963">Cytoplasm</keyword>
<keyword id="KW-0255">Endonuclease</keyword>
<keyword id="KW-0378">Hydrolase</keyword>
<keyword id="KW-0460">Magnesium</keyword>
<keyword id="KW-0479">Metal-binding</keyword>
<keyword id="KW-0540">Nuclease</keyword>
<keyword id="KW-1185">Reference proteome</keyword>
<keyword id="KW-0690">Ribosome biogenesis</keyword>
<keyword id="KW-0694">RNA-binding</keyword>
<keyword id="KW-0698">rRNA processing</keyword>
<keyword id="KW-0699">rRNA-binding</keyword>
<reference key="1">
    <citation type="journal article" date="2001" name="J. Bacteriol.">
        <title>Genome of the bacterium Streptococcus pneumoniae strain R6.</title>
        <authorList>
            <person name="Hoskins J."/>
            <person name="Alborn W.E. Jr."/>
            <person name="Arnold J."/>
            <person name="Blaszczak L.C."/>
            <person name="Burgett S."/>
            <person name="DeHoff B.S."/>
            <person name="Estrem S.T."/>
            <person name="Fritz L."/>
            <person name="Fu D.-J."/>
            <person name="Fuller W."/>
            <person name="Geringer C."/>
            <person name="Gilmour R."/>
            <person name="Glass J.S."/>
            <person name="Khoja H."/>
            <person name="Kraft A.R."/>
            <person name="Lagace R.E."/>
            <person name="LeBlanc D.J."/>
            <person name="Lee L.N."/>
            <person name="Lefkowitz E.J."/>
            <person name="Lu J."/>
            <person name="Matsushima P."/>
            <person name="McAhren S.M."/>
            <person name="McHenney M."/>
            <person name="McLeaster K."/>
            <person name="Mundy C.W."/>
            <person name="Nicas T.I."/>
            <person name="Norris F.H."/>
            <person name="O'Gara M."/>
            <person name="Peery R.B."/>
            <person name="Robertson G.T."/>
            <person name="Rockey P."/>
            <person name="Sun P.-M."/>
            <person name="Winkler M.E."/>
            <person name="Yang Y."/>
            <person name="Young-Bellido M."/>
            <person name="Zhao G."/>
            <person name="Zook C.A."/>
            <person name="Baltz R.H."/>
            <person name="Jaskunas S.R."/>
            <person name="Rosteck P.R. Jr."/>
            <person name="Skatrud P.L."/>
            <person name="Glass J.I."/>
        </authorList>
    </citation>
    <scope>NUCLEOTIDE SEQUENCE [LARGE SCALE GENOMIC DNA]</scope>
    <source>
        <strain>ATCC BAA-255 / R6</strain>
    </source>
</reference>
<gene>
    <name evidence="1" type="primary">rnmV</name>
    <name type="ordered locus">spr1804</name>
</gene>
<feature type="chain" id="PRO_0000416758" description="Ribonuclease M5">
    <location>
        <begin position="1"/>
        <end position="186"/>
    </location>
</feature>
<feature type="domain" description="Toprim" evidence="1">
    <location>
        <begin position="6"/>
        <end position="89"/>
    </location>
</feature>
<feature type="binding site" evidence="1">
    <location>
        <position position="12"/>
    </location>
    <ligand>
        <name>Mg(2+)</name>
        <dbReference type="ChEBI" id="CHEBI:18420"/>
        <label>1</label>
        <note>catalytic</note>
    </ligand>
</feature>
<feature type="binding site" evidence="1">
    <location>
        <position position="58"/>
    </location>
    <ligand>
        <name>Mg(2+)</name>
        <dbReference type="ChEBI" id="CHEBI:18420"/>
        <label>1</label>
        <note>catalytic</note>
    </ligand>
</feature>
<feature type="binding site" evidence="1">
    <location>
        <position position="58"/>
    </location>
    <ligand>
        <name>Mg(2+)</name>
        <dbReference type="ChEBI" id="CHEBI:18420"/>
        <label>2</label>
    </ligand>
</feature>
<feature type="binding site" evidence="1">
    <location>
        <position position="60"/>
    </location>
    <ligand>
        <name>Mg(2+)</name>
        <dbReference type="ChEBI" id="CHEBI:18420"/>
        <label>2</label>
    </ligand>
</feature>
<name>RNM5_STRR6</name>
<proteinExistence type="inferred from homology"/>